<protein>
    <recommendedName>
        <fullName>Protein ssh4</fullName>
    </recommendedName>
</protein>
<keyword id="KW-0967">Endosome</keyword>
<keyword id="KW-0325">Glycoprotein</keyword>
<keyword id="KW-0472">Membrane</keyword>
<keyword id="KW-0653">Protein transport</keyword>
<keyword id="KW-1185">Reference proteome</keyword>
<keyword id="KW-0735">Signal-anchor</keyword>
<keyword id="KW-0812">Transmembrane</keyword>
<keyword id="KW-1133">Transmembrane helix</keyword>
<keyword id="KW-0813">Transport</keyword>
<keyword id="KW-0926">Vacuole</keyword>
<gene>
    <name type="primary">ssh4</name>
    <name type="ORF">BC1G_07322</name>
    <name type="ORF">BCIN_10g00340</name>
</gene>
<organism>
    <name type="scientific">Botryotinia fuckeliana (strain B05.10)</name>
    <name type="common">Noble rot fungus</name>
    <name type="synonym">Botrytis cinerea</name>
    <dbReference type="NCBI Taxonomy" id="332648"/>
    <lineage>
        <taxon>Eukaryota</taxon>
        <taxon>Fungi</taxon>
        <taxon>Dikarya</taxon>
        <taxon>Ascomycota</taxon>
        <taxon>Pezizomycotina</taxon>
        <taxon>Leotiomycetes</taxon>
        <taxon>Helotiales</taxon>
        <taxon>Sclerotiniaceae</taxon>
        <taxon>Botrytis</taxon>
    </lineage>
</organism>
<name>SSH4_BOTFB</name>
<dbReference type="EMBL" id="CP009814">
    <property type="protein sequence ID" value="ATZ54008.1"/>
    <property type="molecule type" value="Genomic_DNA"/>
</dbReference>
<dbReference type="SMR" id="A6S3E0"/>
<dbReference type="GlyCosmos" id="A6S3E0">
    <property type="glycosylation" value="2 sites, No reported glycans"/>
</dbReference>
<dbReference type="EnsemblFungi" id="Bcin10g00340.1">
    <property type="protein sequence ID" value="Bcin10p00340.1"/>
    <property type="gene ID" value="Bcin10g00340"/>
</dbReference>
<dbReference type="GeneID" id="5434764"/>
<dbReference type="KEGG" id="bfu:BCIN_10g00340"/>
<dbReference type="VEuPathDB" id="FungiDB:Bcin10g00340"/>
<dbReference type="OMA" id="FFFKYTR"/>
<dbReference type="OrthoDB" id="258495at2759"/>
<dbReference type="Proteomes" id="UP000001798">
    <property type="component" value="Chromosome bcin10"/>
</dbReference>
<dbReference type="GO" id="GO:0010008">
    <property type="term" value="C:endosome membrane"/>
    <property type="evidence" value="ECO:0007669"/>
    <property type="project" value="UniProtKB-SubCell"/>
</dbReference>
<dbReference type="GO" id="GO:0005774">
    <property type="term" value="C:vacuolar membrane"/>
    <property type="evidence" value="ECO:0007669"/>
    <property type="project" value="UniProtKB-SubCell"/>
</dbReference>
<dbReference type="GO" id="GO:0015031">
    <property type="term" value="P:protein transport"/>
    <property type="evidence" value="ECO:0007669"/>
    <property type="project" value="UniProtKB-KW"/>
</dbReference>
<dbReference type="CDD" id="cd12910">
    <property type="entry name" value="SPRY_SSH4_like"/>
    <property type="match status" value="1"/>
</dbReference>
<dbReference type="FunFam" id="2.60.120.920:FF:000065">
    <property type="entry name" value="Ear1p"/>
    <property type="match status" value="1"/>
</dbReference>
<dbReference type="Gene3D" id="2.60.120.920">
    <property type="match status" value="1"/>
</dbReference>
<dbReference type="InterPro" id="IPR001870">
    <property type="entry name" value="B30.2/SPRY"/>
</dbReference>
<dbReference type="InterPro" id="IPR043136">
    <property type="entry name" value="B30.2/SPRY_sf"/>
</dbReference>
<dbReference type="InterPro" id="IPR013320">
    <property type="entry name" value="ConA-like_dom_sf"/>
</dbReference>
<dbReference type="InterPro" id="IPR003877">
    <property type="entry name" value="SPRY_dom"/>
</dbReference>
<dbReference type="InterPro" id="IPR035780">
    <property type="entry name" value="SPRY_Ssh4-like"/>
</dbReference>
<dbReference type="InterPro" id="IPR050618">
    <property type="entry name" value="Ubq-SigPath_Reg"/>
</dbReference>
<dbReference type="PANTHER" id="PTHR12864">
    <property type="entry name" value="RAN BINDING PROTEIN 9-RELATED"/>
    <property type="match status" value="1"/>
</dbReference>
<dbReference type="Pfam" id="PF00622">
    <property type="entry name" value="SPRY"/>
    <property type="match status" value="1"/>
</dbReference>
<dbReference type="SMART" id="SM00449">
    <property type="entry name" value="SPRY"/>
    <property type="match status" value="1"/>
</dbReference>
<dbReference type="SUPFAM" id="SSF49899">
    <property type="entry name" value="Concanavalin A-like lectins/glucanases"/>
    <property type="match status" value="1"/>
</dbReference>
<dbReference type="PROSITE" id="PS50188">
    <property type="entry name" value="B302_SPRY"/>
    <property type="match status" value="1"/>
</dbReference>
<evidence type="ECO:0000250" key="1"/>
<evidence type="ECO:0000255" key="2"/>
<evidence type="ECO:0000255" key="3">
    <source>
        <dbReference type="PROSITE-ProRule" id="PRU00548"/>
    </source>
</evidence>
<evidence type="ECO:0000256" key="4">
    <source>
        <dbReference type="SAM" id="MobiDB-lite"/>
    </source>
</evidence>
<evidence type="ECO:0000305" key="5"/>
<sequence length="537" mass="58619">MEDFLRGMQQSTLTTSVLFATPTSIPIIAAAQEALRDTLQQPTSLQRAAAAVATSTSSDNVQLKSSNDSTINGVVIGLLSSFGSAILIAFIFLIVYFFKYTSSGRILLDRIGRPGEYDDEQAFAKEEAEALEEMDDLQRTEYLRAKAFVQSNPPDSLPTDISLSQYLAIQEKGVSAWEFEPELEIANCFVEARTEIEFFDSECCTLTNLPVPKQNEVYYWESKIYDKPENTLISIGVATKPYPLFRLPGWHKYSVAYTSTGHRRYNQPFSGPVYGPQYVQGDVIGVGYRPRTGTIFFTRNGKKLEDVAHGLKSQNLFPAVGANGPCTVHVNFGQSGFVFIEANVKKWGLAPMTGSLAPPPPYGSEQGSILLEAGREGAQSSNGHYQPDPRHGRTRSGNFRHGPPTSPGPIRSPTDISLAQLTHFPSHEEPGEASNSSTPAPTGGVTQQSGLGVHDNAQPPPEYTSPLPSAAGSPRGSTDSERTPMLRRKTTPPPIPSYNDAVAQRNRSHSHRDRSGGRRERSDSHRARQGDGNPSQS</sequence>
<comment type="function">
    <text evidence="1">Components of the endosome-vacuole trafficking pathway that regulates nutrient transport. May be involved in processes which determine whether plasma membrane proteins are degraded or routed to the plasma membrane (By similarity).</text>
</comment>
<comment type="subcellular location">
    <subcellularLocation>
        <location evidence="1">Vacuole membrane</location>
        <topology evidence="1">Single-pass type II membrane protein</topology>
    </subcellularLocation>
    <subcellularLocation>
        <location evidence="1">Endosome membrane</location>
        <topology evidence="1">Single-pass type II membrane protein</topology>
    </subcellularLocation>
</comment>
<comment type="similarity">
    <text evidence="5">Belongs to the SSH4 family.</text>
</comment>
<proteinExistence type="inferred from homology"/>
<feature type="chain" id="PRO_0000324478" description="Protein ssh4">
    <location>
        <begin position="1"/>
        <end position="537"/>
    </location>
</feature>
<feature type="topological domain" description="Cytoplasmic" evidence="2">
    <location>
        <begin position="1"/>
        <end position="73"/>
    </location>
</feature>
<feature type="transmembrane region" description="Helical; Signal-anchor for type II membrane protein" evidence="2">
    <location>
        <begin position="74"/>
        <end position="94"/>
    </location>
</feature>
<feature type="topological domain" description="Lumenal" evidence="2">
    <location>
        <begin position="95"/>
        <end position="537"/>
    </location>
</feature>
<feature type="domain" description="B30.2/SPRY" evidence="3">
    <location>
        <begin position="141"/>
        <end position="337"/>
    </location>
</feature>
<feature type="region of interest" description="Disordered" evidence="4">
    <location>
        <begin position="375"/>
        <end position="414"/>
    </location>
</feature>
<feature type="region of interest" description="Disordered" evidence="4">
    <location>
        <begin position="426"/>
        <end position="537"/>
    </location>
</feature>
<feature type="compositionally biased region" description="Polar residues" evidence="4">
    <location>
        <begin position="433"/>
        <end position="450"/>
    </location>
</feature>
<feature type="compositionally biased region" description="Basic and acidic residues" evidence="4">
    <location>
        <begin position="513"/>
        <end position="529"/>
    </location>
</feature>
<feature type="glycosylation site" description="N-linked (GlcNAc...) asparagine" evidence="2">
    <location>
        <position position="435"/>
    </location>
</feature>
<feature type="glycosylation site" description="N-linked (GlcNAc...) asparagine" evidence="2">
    <location>
        <position position="506"/>
    </location>
</feature>
<reference key="1">
    <citation type="journal article" date="2011" name="PLoS Genet.">
        <title>Genomic analysis of the necrotrophic fungal pathogens Sclerotinia sclerotiorum and Botrytis cinerea.</title>
        <authorList>
            <person name="Amselem J."/>
            <person name="Cuomo C.A."/>
            <person name="van Kan J.A.L."/>
            <person name="Viaud M."/>
            <person name="Benito E.P."/>
            <person name="Couloux A."/>
            <person name="Coutinho P.M."/>
            <person name="de Vries R.P."/>
            <person name="Dyer P.S."/>
            <person name="Fillinger S."/>
            <person name="Fournier E."/>
            <person name="Gout L."/>
            <person name="Hahn M."/>
            <person name="Kohn L."/>
            <person name="Lapalu N."/>
            <person name="Plummer K.M."/>
            <person name="Pradier J.-M."/>
            <person name="Quevillon E."/>
            <person name="Sharon A."/>
            <person name="Simon A."/>
            <person name="ten Have A."/>
            <person name="Tudzynski B."/>
            <person name="Tudzynski P."/>
            <person name="Wincker P."/>
            <person name="Andrew M."/>
            <person name="Anthouard V."/>
            <person name="Beever R.E."/>
            <person name="Beffa R."/>
            <person name="Benoit I."/>
            <person name="Bouzid O."/>
            <person name="Brault B."/>
            <person name="Chen Z."/>
            <person name="Choquer M."/>
            <person name="Collemare J."/>
            <person name="Cotton P."/>
            <person name="Danchin E.G."/>
            <person name="Da Silva C."/>
            <person name="Gautier A."/>
            <person name="Giraud C."/>
            <person name="Giraud T."/>
            <person name="Gonzalez C."/>
            <person name="Grossetete S."/>
            <person name="Gueldener U."/>
            <person name="Henrissat B."/>
            <person name="Howlett B.J."/>
            <person name="Kodira C."/>
            <person name="Kretschmer M."/>
            <person name="Lappartient A."/>
            <person name="Leroch M."/>
            <person name="Levis C."/>
            <person name="Mauceli E."/>
            <person name="Neuveglise C."/>
            <person name="Oeser B."/>
            <person name="Pearson M."/>
            <person name="Poulain J."/>
            <person name="Poussereau N."/>
            <person name="Quesneville H."/>
            <person name="Rascle C."/>
            <person name="Schumacher J."/>
            <person name="Segurens B."/>
            <person name="Sexton A."/>
            <person name="Silva E."/>
            <person name="Sirven C."/>
            <person name="Soanes D.M."/>
            <person name="Talbot N.J."/>
            <person name="Templeton M."/>
            <person name="Yandava C."/>
            <person name="Yarden O."/>
            <person name="Zeng Q."/>
            <person name="Rollins J.A."/>
            <person name="Lebrun M.-H."/>
            <person name="Dickman M."/>
        </authorList>
    </citation>
    <scope>NUCLEOTIDE SEQUENCE [LARGE SCALE GENOMIC DNA]</scope>
    <source>
        <strain>B05.10</strain>
    </source>
</reference>
<reference key="2">
    <citation type="journal article" date="2012" name="Eukaryot. Cell">
        <title>Genome update of Botrytis cinerea strains B05.10 and T4.</title>
        <authorList>
            <person name="Staats M."/>
            <person name="van Kan J.A.L."/>
        </authorList>
    </citation>
    <scope>NUCLEOTIDE SEQUENCE [LARGE SCALE GENOMIC DNA]</scope>
    <scope>GENOME REANNOTATION</scope>
    <source>
        <strain>B05.10</strain>
    </source>
</reference>
<reference key="3">
    <citation type="journal article" date="2017" name="Mol. Plant Pathol.">
        <title>A gapless genome sequence of the fungus Botrytis cinerea.</title>
        <authorList>
            <person name="van Kan J.A.L."/>
            <person name="Stassen J.H.M."/>
            <person name="Mosbach A."/>
            <person name="van der Lee T.A.J."/>
            <person name="Faino L."/>
            <person name="Farmer A.D."/>
            <person name="Papasotiriou D.G."/>
            <person name="Zhou S."/>
            <person name="Seidl M.F."/>
            <person name="Cottam E."/>
            <person name="Edel D."/>
            <person name="Hahn M."/>
            <person name="Schwartz D.C."/>
            <person name="Dietrich R.A."/>
            <person name="Widdison S."/>
            <person name="Scalliet G."/>
        </authorList>
    </citation>
    <scope>NUCLEOTIDE SEQUENCE [LARGE SCALE GENOMIC DNA]</scope>
    <scope>GENOME REANNOTATION</scope>
    <source>
        <strain>B05.10</strain>
    </source>
</reference>
<accession>A6S3E0</accession>
<accession>A0A384JTU8</accession>